<keyword id="KW-0903">Direct protein sequencing</keyword>
<keyword id="KW-1015">Disulfide bond</keyword>
<keyword id="KW-0325">Glycoprotein</keyword>
<keyword id="KW-0326">Glycosidase</keyword>
<keyword id="KW-0333">Golgi apparatus</keyword>
<keyword id="KW-0378">Hydrolase</keyword>
<keyword id="KW-0472">Membrane</keyword>
<keyword id="KW-0479">Metal-binding</keyword>
<keyword id="KW-0597">Phosphoprotein</keyword>
<keyword id="KW-1185">Reference proteome</keyword>
<keyword id="KW-0735">Signal-anchor</keyword>
<keyword id="KW-0812">Transmembrane</keyword>
<keyword id="KW-1133">Transmembrane helix</keyword>
<keyword id="KW-0862">Zinc</keyword>
<accession>P27046</accession>
<accession>B9EHS6</accession>
<reference key="1">
    <citation type="journal article" date="1991" name="J. Cell Biol.">
        <title>Isolation, characterization, and expression of cDNAs encoding murine alpha-mannosidase II, a Golgi enzyme that controls conversion of high mannose to complex N-glycans.</title>
        <authorList>
            <person name="Moremen K.W."/>
            <person name="Robbins P.W."/>
        </authorList>
    </citation>
    <scope>NUCLEOTIDE SEQUENCE [MRNA]</scope>
    <scope>PARTIAL PROTEIN SEQUENCE</scope>
    <source>
        <strain>BALB/cJ</strain>
    </source>
</reference>
<reference key="2">
    <citation type="journal article" date="2004" name="Genome Res.">
        <title>The status, quality, and expansion of the NIH full-length cDNA project: the Mammalian Gene Collection (MGC).</title>
        <authorList>
            <consortium name="The MGC Project Team"/>
        </authorList>
    </citation>
    <scope>NUCLEOTIDE SEQUENCE [LARGE SCALE MRNA]</scope>
    <source>
        <tissue>Brain</tissue>
    </source>
</reference>
<reference key="3">
    <citation type="journal article" date="2007" name="Proc. Natl. Acad. Sci. U.S.A.">
        <title>Large-scale phosphorylation analysis of mouse liver.</title>
        <authorList>
            <person name="Villen J."/>
            <person name="Beausoleil S.A."/>
            <person name="Gerber S.A."/>
            <person name="Gygi S.P."/>
        </authorList>
    </citation>
    <scope>PHOSPHORYLATION [LARGE SCALE ANALYSIS] AT SER-80 AND SER-82</scope>
    <scope>IDENTIFICATION BY MASS SPECTROMETRY [LARGE SCALE ANALYSIS]</scope>
    <source>
        <tissue>Liver</tissue>
    </source>
</reference>
<reference key="4">
    <citation type="journal article" date="2010" name="Cell">
        <title>A tissue-specific atlas of mouse protein phosphorylation and expression.</title>
        <authorList>
            <person name="Huttlin E.L."/>
            <person name="Jedrychowski M.P."/>
            <person name="Elias J.E."/>
            <person name="Goswami T."/>
            <person name="Rad R."/>
            <person name="Beausoleil S.A."/>
            <person name="Villen J."/>
            <person name="Haas W."/>
            <person name="Sowa M.E."/>
            <person name="Gygi S.P."/>
        </authorList>
    </citation>
    <scope>PHOSPHORYLATION [LARGE SCALE ANALYSIS] AT SER-80 AND SER-82</scope>
    <scope>IDENTIFICATION BY MASS SPECTROMETRY [LARGE SCALE ANALYSIS]</scope>
    <source>
        <tissue>Brain</tissue>
        <tissue>Brown adipose tissue</tissue>
        <tissue>Heart</tissue>
        <tissue>Kidney</tissue>
        <tissue>Liver</tissue>
        <tissue>Lung</tissue>
        <tissue>Pancreas</tissue>
        <tissue>Spleen</tissue>
        <tissue>Testis</tissue>
    </source>
</reference>
<dbReference type="EC" id="3.2.1.114" evidence="2"/>
<dbReference type="EMBL" id="X61172">
    <property type="protein sequence ID" value="CAA43480.1"/>
    <property type="molecule type" value="mRNA"/>
</dbReference>
<dbReference type="EMBL" id="BC138371">
    <property type="protein sequence ID" value="AAI38372.1"/>
    <property type="molecule type" value="mRNA"/>
</dbReference>
<dbReference type="EMBL" id="BC138372">
    <property type="protein sequence ID" value="AAI38373.1"/>
    <property type="molecule type" value="mRNA"/>
</dbReference>
<dbReference type="CCDS" id="CCDS28938.1"/>
<dbReference type="PIR" id="A41641">
    <property type="entry name" value="A41641"/>
</dbReference>
<dbReference type="RefSeq" id="NP_032575.2">
    <property type="nucleotide sequence ID" value="NM_008549.2"/>
</dbReference>
<dbReference type="SMR" id="P27046"/>
<dbReference type="BioGRID" id="201304">
    <property type="interactions" value="2"/>
</dbReference>
<dbReference type="FunCoup" id="P27046">
    <property type="interactions" value="1616"/>
</dbReference>
<dbReference type="IntAct" id="P27046">
    <property type="interactions" value="2"/>
</dbReference>
<dbReference type="STRING" id="10090.ENSMUSP00000083928"/>
<dbReference type="CAZy" id="GH38">
    <property type="family name" value="Glycoside Hydrolase Family 38"/>
</dbReference>
<dbReference type="GlyCosmos" id="P27046">
    <property type="glycosylation" value="3 sites, No reported glycans"/>
</dbReference>
<dbReference type="GlyGen" id="P27046">
    <property type="glycosylation" value="5 sites, 2 N-linked glycans (2 sites), 1 O-linked glycan (1 site)"/>
</dbReference>
<dbReference type="iPTMnet" id="P27046"/>
<dbReference type="PhosphoSitePlus" id="P27046"/>
<dbReference type="SwissPalm" id="P27046"/>
<dbReference type="jPOST" id="P27046"/>
<dbReference type="PaxDb" id="10090-ENSMUSP00000083928"/>
<dbReference type="PeptideAtlas" id="P27046"/>
<dbReference type="ProteomicsDB" id="291990"/>
<dbReference type="Pumba" id="P27046"/>
<dbReference type="Antibodypedia" id="13482">
    <property type="antibodies" value="179 antibodies from 29 providers"/>
</dbReference>
<dbReference type="DNASU" id="17158"/>
<dbReference type="Ensembl" id="ENSMUST00000086723.10">
    <property type="protein sequence ID" value="ENSMUSP00000083928.4"/>
    <property type="gene ID" value="ENSMUSG00000024085.14"/>
</dbReference>
<dbReference type="GeneID" id="17158"/>
<dbReference type="KEGG" id="mmu:17158"/>
<dbReference type="UCSC" id="uc008dfy.1">
    <property type="organism name" value="mouse"/>
</dbReference>
<dbReference type="AGR" id="MGI:104669"/>
<dbReference type="CTD" id="4124"/>
<dbReference type="MGI" id="MGI:104669">
    <property type="gene designation" value="Man2a1"/>
</dbReference>
<dbReference type="VEuPathDB" id="HostDB:ENSMUSG00000024085"/>
<dbReference type="eggNOG" id="KOG1958">
    <property type="taxonomic scope" value="Eukaryota"/>
</dbReference>
<dbReference type="GeneTree" id="ENSGT01030000234638"/>
<dbReference type="HOGENOM" id="CLU_004690_1_0_1"/>
<dbReference type="InParanoid" id="P27046"/>
<dbReference type="OMA" id="NTDILCH"/>
<dbReference type="OrthoDB" id="10261055at2759"/>
<dbReference type="PhylomeDB" id="P27046"/>
<dbReference type="TreeFam" id="TF313152"/>
<dbReference type="BRENDA" id="3.2.1.114">
    <property type="organism ID" value="3474"/>
</dbReference>
<dbReference type="Reactome" id="R-MMU-975578">
    <property type="pathway name" value="Reactions specific to the complex N-glycan synthesis pathway"/>
</dbReference>
<dbReference type="UniPathway" id="UPA00378"/>
<dbReference type="BioGRID-ORCS" id="17158">
    <property type="hits" value="5 hits in 78 CRISPR screens"/>
</dbReference>
<dbReference type="ChiTaRS" id="Man2a1">
    <property type="organism name" value="mouse"/>
</dbReference>
<dbReference type="PRO" id="PR:P27046"/>
<dbReference type="Proteomes" id="UP000000589">
    <property type="component" value="Chromosome 17"/>
</dbReference>
<dbReference type="RNAct" id="P27046">
    <property type="molecule type" value="protein"/>
</dbReference>
<dbReference type="Bgee" id="ENSMUSG00000024085">
    <property type="expression patterns" value="Expressed in stroma of bone marrow and 241 other cell types or tissues"/>
</dbReference>
<dbReference type="ExpressionAtlas" id="P27046">
    <property type="expression patterns" value="baseline and differential"/>
</dbReference>
<dbReference type="GO" id="GO:0005801">
    <property type="term" value="C:cis-Golgi network"/>
    <property type="evidence" value="ECO:0000314"/>
    <property type="project" value="MGI"/>
</dbReference>
<dbReference type="GO" id="GO:0005615">
    <property type="term" value="C:extracellular space"/>
    <property type="evidence" value="ECO:0000314"/>
    <property type="project" value="MGI"/>
</dbReference>
<dbReference type="GO" id="GO:0005794">
    <property type="term" value="C:Golgi apparatus"/>
    <property type="evidence" value="ECO:0000314"/>
    <property type="project" value="MGI"/>
</dbReference>
<dbReference type="GO" id="GO:0005797">
    <property type="term" value="C:Golgi medial cisterna"/>
    <property type="evidence" value="ECO:0007669"/>
    <property type="project" value="Ensembl"/>
</dbReference>
<dbReference type="GO" id="GO:0000139">
    <property type="term" value="C:Golgi membrane"/>
    <property type="evidence" value="ECO:0000314"/>
    <property type="project" value="MGI"/>
</dbReference>
<dbReference type="GO" id="GO:0030246">
    <property type="term" value="F:carbohydrate binding"/>
    <property type="evidence" value="ECO:0007669"/>
    <property type="project" value="InterPro"/>
</dbReference>
<dbReference type="GO" id="GO:0016787">
    <property type="term" value="F:hydrolase activity"/>
    <property type="evidence" value="ECO:0000314"/>
    <property type="project" value="MGI"/>
</dbReference>
<dbReference type="GO" id="GO:0016799">
    <property type="term" value="F:hydrolase activity, hydrolyzing N-glycosyl compounds"/>
    <property type="evidence" value="ECO:0000314"/>
    <property type="project" value="MGI"/>
</dbReference>
<dbReference type="GO" id="GO:0015923">
    <property type="term" value="F:mannosidase activity"/>
    <property type="evidence" value="ECO:0000314"/>
    <property type="project" value="MGI"/>
</dbReference>
<dbReference type="GO" id="GO:0004572">
    <property type="term" value="F:mannosyl-oligosaccharide 1,3-1,6-alpha-mannosidase activity"/>
    <property type="evidence" value="ECO:0007669"/>
    <property type="project" value="UniProtKB-EC"/>
</dbReference>
<dbReference type="GO" id="GO:0046872">
    <property type="term" value="F:metal ion binding"/>
    <property type="evidence" value="ECO:0007669"/>
    <property type="project" value="UniProtKB-KW"/>
</dbReference>
<dbReference type="GO" id="GO:0001701">
    <property type="term" value="P:in utero embryonic development"/>
    <property type="evidence" value="ECO:0000316"/>
    <property type="project" value="MGI"/>
</dbReference>
<dbReference type="GO" id="GO:0001889">
    <property type="term" value="P:liver development"/>
    <property type="evidence" value="ECO:0000316"/>
    <property type="project" value="MGI"/>
</dbReference>
<dbReference type="GO" id="GO:0048286">
    <property type="term" value="P:lung alveolus development"/>
    <property type="evidence" value="ECO:0000316"/>
    <property type="project" value="MGI"/>
</dbReference>
<dbReference type="GO" id="GO:0006013">
    <property type="term" value="P:mannose metabolic process"/>
    <property type="evidence" value="ECO:0007669"/>
    <property type="project" value="InterPro"/>
</dbReference>
<dbReference type="GO" id="GO:0007005">
    <property type="term" value="P:mitochondrion organization"/>
    <property type="evidence" value="ECO:0000316"/>
    <property type="project" value="MGI"/>
</dbReference>
<dbReference type="GO" id="GO:0006491">
    <property type="term" value="P:N-glycan processing"/>
    <property type="evidence" value="ECO:0000316"/>
    <property type="project" value="MGI"/>
</dbReference>
<dbReference type="GO" id="GO:0050769">
    <property type="term" value="P:positive regulation of neurogenesis"/>
    <property type="evidence" value="ECO:0000315"/>
    <property type="project" value="MGI"/>
</dbReference>
<dbReference type="GO" id="GO:0006486">
    <property type="term" value="P:protein glycosylation"/>
    <property type="evidence" value="ECO:0007669"/>
    <property type="project" value="UniProtKB-UniPathway"/>
</dbReference>
<dbReference type="GO" id="GO:0007585">
    <property type="term" value="P:respiratory gaseous exchange by respiratory system"/>
    <property type="evidence" value="ECO:0000316"/>
    <property type="project" value="MGI"/>
</dbReference>
<dbReference type="GO" id="GO:0060042">
    <property type="term" value="P:retina morphogenesis in camera-type eye"/>
    <property type="evidence" value="ECO:0000315"/>
    <property type="project" value="MGI"/>
</dbReference>
<dbReference type="GO" id="GO:0007033">
    <property type="term" value="P:vacuole organization"/>
    <property type="evidence" value="ECO:0000316"/>
    <property type="project" value="MGI"/>
</dbReference>
<dbReference type="CDD" id="cd11666">
    <property type="entry name" value="GH38N_Man2A1"/>
    <property type="match status" value="1"/>
</dbReference>
<dbReference type="FunFam" id="1.20.1270.50:FF:000001">
    <property type="entry name" value="Alpha-mannosidase"/>
    <property type="match status" value="1"/>
</dbReference>
<dbReference type="FunFam" id="2.60.40.1180:FF:000009">
    <property type="entry name" value="Alpha-mannosidase"/>
    <property type="match status" value="1"/>
</dbReference>
<dbReference type="FunFam" id="2.70.98.30:FF:000002">
    <property type="entry name" value="Alpha-mannosidase"/>
    <property type="match status" value="1"/>
</dbReference>
<dbReference type="FunFam" id="3.20.110.10:FF:000003">
    <property type="entry name" value="Alpha-mannosidase"/>
    <property type="match status" value="1"/>
</dbReference>
<dbReference type="Gene3D" id="3.20.110.10">
    <property type="entry name" value="Glycoside hydrolase 38, N terminal domain"/>
    <property type="match status" value="1"/>
</dbReference>
<dbReference type="Gene3D" id="1.20.1270.50">
    <property type="entry name" value="Glycoside hydrolase family 38, central domain"/>
    <property type="match status" value="1"/>
</dbReference>
<dbReference type="Gene3D" id="2.60.40.1180">
    <property type="entry name" value="Golgi alpha-mannosidase II"/>
    <property type="match status" value="1"/>
</dbReference>
<dbReference type="Gene3D" id="2.70.98.30">
    <property type="entry name" value="Golgi alpha-mannosidase II, domain 4"/>
    <property type="match status" value="1"/>
</dbReference>
<dbReference type="InterPro" id="IPR011013">
    <property type="entry name" value="Gal_mutarotase_sf_dom"/>
</dbReference>
<dbReference type="InterPro" id="IPR011330">
    <property type="entry name" value="Glyco_hydro/deAcase_b/a-brl"/>
</dbReference>
<dbReference type="InterPro" id="IPR011682">
    <property type="entry name" value="Glyco_hydro_38_C"/>
</dbReference>
<dbReference type="InterPro" id="IPR015341">
    <property type="entry name" value="Glyco_hydro_38_cen"/>
</dbReference>
<dbReference type="InterPro" id="IPR037094">
    <property type="entry name" value="Glyco_hydro_38_cen_sf"/>
</dbReference>
<dbReference type="InterPro" id="IPR000602">
    <property type="entry name" value="Glyco_hydro_38_N"/>
</dbReference>
<dbReference type="InterPro" id="IPR027291">
    <property type="entry name" value="Glyco_hydro_38_N_sf"/>
</dbReference>
<dbReference type="InterPro" id="IPR028995">
    <property type="entry name" value="Glyco_hydro_57/38_cen_sf"/>
</dbReference>
<dbReference type="InterPro" id="IPR013780">
    <property type="entry name" value="Glyco_hydro_b"/>
</dbReference>
<dbReference type="InterPro" id="IPR050843">
    <property type="entry name" value="Glycosyl_Hydrlase_38"/>
</dbReference>
<dbReference type="PANTHER" id="PTHR11607">
    <property type="entry name" value="ALPHA-MANNOSIDASE"/>
    <property type="match status" value="1"/>
</dbReference>
<dbReference type="PANTHER" id="PTHR11607:SF69">
    <property type="entry name" value="ALPHA-MANNOSIDASE 2"/>
    <property type="match status" value="1"/>
</dbReference>
<dbReference type="Pfam" id="PF09261">
    <property type="entry name" value="Alpha-mann_mid"/>
    <property type="match status" value="1"/>
</dbReference>
<dbReference type="Pfam" id="PF07748">
    <property type="entry name" value="Glyco_hydro_38C"/>
    <property type="match status" value="1"/>
</dbReference>
<dbReference type="Pfam" id="PF01074">
    <property type="entry name" value="Glyco_hydro_38N"/>
    <property type="match status" value="1"/>
</dbReference>
<dbReference type="SMART" id="SM00872">
    <property type="entry name" value="Alpha-mann_mid"/>
    <property type="match status" value="1"/>
</dbReference>
<dbReference type="SUPFAM" id="SSF88688">
    <property type="entry name" value="Families 57/38 glycoside transferase middle domain"/>
    <property type="match status" value="1"/>
</dbReference>
<dbReference type="SUPFAM" id="SSF74650">
    <property type="entry name" value="Galactose mutarotase-like"/>
    <property type="match status" value="1"/>
</dbReference>
<dbReference type="SUPFAM" id="SSF88713">
    <property type="entry name" value="Glycoside hydrolase/deacetylase"/>
    <property type="match status" value="1"/>
</dbReference>
<sequence length="1150" mass="131631">MKLSRQFTVFGSAIFCVVIFSLYLMLDRGHLDYPRGPRQEGSFPQGQLSILQEKIDHLERLLAENNEIISNIRDSVINLSESVEDGPRGSPGNASQGSIHLHSPQLALQADPRDCLFASQSGSQPRDVQMLDVYDLIPFDNPDGGVWKQGFDIKYEADEWDHEPLQVFVVPHSHNDPGWLKTFNDYFRDKTQYIFNNMVLKLKEDSSRKFMWSEISYLAKWWDIIDIPKKEAVKSLLQNGQLEIVTGGWVMPDEATPHYFALIDQLIEGHQWLEKNLGVKPRSGWAIDPFGHSPTMAYLLKRAGFSHMLIQRVHYAIKKHFSLHKTLEFFWRQNWDLGSATDILCHMMPFYSYDIPHTCGPDPKICCQFDFKRLPGGRYGCPWGVPPEAISPGNVQSRAQMLLDQYRKKSKLFRTKVLLAPLGDDFRFSEYTEWDLQCRNYEQLFSYMNSQPHLKVKIQFGTLSDYFDALEKAVAAEKKSSQSVFPALSGDFFTYADRDDHYWSGYFTSRPFYKRMDRIMESRIRAAEILYQLALKQAQKYKINKFLSSPHYTTLTEARRNLGLFQHHDAITGTAKDWVVVDYGTRLFQSLNSLEKIIGDSAFLLILKDKKLYQSDPSKAFLEMDTKQSSQDSLPQKIIIQLSAQEPRYLVVYNPFEQERHSVVSIRVNSATVKVLSDSGKPVEVQVSAVWNDMRTISQAAYEVSFLAHIPPLGLKVFKILESQSSSSHLADYVLYNNDGLAENGIFHVKNMVDAGDAITIENPFLAIWFDRSGLMEKVRRKEDSRQHELKVQFLWYGTTNKRDKSGAYLFLPDGQGQPYVSLRPPFVRVTRGRIYSDVTCFLEHVTHKVRLYNIQGIEGQSMEVSNIVNIRNVHNREIVMRISSKINNQNRYYTDLNGYQIQPRRTMSKLPLQANVYPMCTMAYIQDAEHRLTLLSAQSLGASSMASGQIEVFMDRRLMQDDNRGLGQGVHDNKITANLFRILLEKRSAVNMEEEKKSPVSYPSLLSHMTSSFLNHPFLPMVLSGQLPSPAFELLSEFPLLQSSLPCDIHLVNLRTIQSKMGKGYSDEAALILHRKGFDCQFSSRGIGLPCSTTQGKMSVLKLFNKFAVESLVPSSLSLMHSPPDAQNMSEVSLSPMEISTFRIRLRWT</sequence>
<protein>
    <recommendedName>
        <fullName>Alpha-mannosidase 2</fullName>
        <ecNumber evidence="2">3.2.1.114</ecNumber>
    </recommendedName>
    <alternativeName>
        <fullName>Golgi alpha-mannosidase II</fullName>
        <shortName>AMan II</shortName>
        <shortName>Man II</shortName>
    </alternativeName>
    <alternativeName>
        <fullName>Mannosidase alpha class 2A member 1</fullName>
    </alternativeName>
    <alternativeName>
        <fullName>Mannosyl-oligosaccharide 1,3-1,6-alpha-mannosidase</fullName>
    </alternativeName>
</protein>
<feature type="chain" id="PRO_0000206903" description="Alpha-mannosidase 2">
    <location>
        <begin position="1"/>
        <end position="1150"/>
    </location>
</feature>
<feature type="topological domain" description="Cytoplasmic" evidence="4">
    <location>
        <begin position="1"/>
        <end position="5"/>
    </location>
</feature>
<feature type="transmembrane region" description="Helical; Signal-anchor for type II membrane protein" evidence="4">
    <location>
        <begin position="6"/>
        <end position="26"/>
    </location>
</feature>
<feature type="topological domain" description="Lumenal" evidence="4">
    <location>
        <begin position="27"/>
        <end position="1150"/>
    </location>
</feature>
<feature type="active site" description="Nucleophile" evidence="1">
    <location>
        <position position="288"/>
    </location>
</feature>
<feature type="binding site" evidence="1">
    <location>
        <position position="174"/>
    </location>
    <ligand>
        <name>Zn(2+)</name>
        <dbReference type="ChEBI" id="CHEBI:29105"/>
    </ligand>
</feature>
<feature type="binding site" evidence="1">
    <location>
        <position position="176"/>
    </location>
    <ligand>
        <name>Zn(2+)</name>
        <dbReference type="ChEBI" id="CHEBI:29105"/>
    </ligand>
</feature>
<feature type="binding site" evidence="1">
    <location>
        <position position="288"/>
    </location>
    <ligand>
        <name>Zn(2+)</name>
        <dbReference type="ChEBI" id="CHEBI:29105"/>
    </ligand>
</feature>
<feature type="binding site" evidence="1">
    <location>
        <position position="568"/>
    </location>
    <ligand>
        <name>Zn(2+)</name>
        <dbReference type="ChEBI" id="CHEBI:29105"/>
    </ligand>
</feature>
<feature type="modified residue" description="Phosphoserine" evidence="6 7">
    <location>
        <position position="80"/>
    </location>
</feature>
<feature type="modified residue" description="Phosphoserine" evidence="6 7">
    <location>
        <position position="82"/>
    </location>
</feature>
<feature type="glycosylation site" description="N-linked (GlcNAc...) asparagine" evidence="4">
    <location>
        <position position="78"/>
    </location>
</feature>
<feature type="glycosylation site" description="N-linked (GlcNAc...) asparagine" evidence="4">
    <location>
        <position position="93"/>
    </location>
</feature>
<feature type="glycosylation site" description="N-linked (GlcNAc...) asparagine" evidence="4">
    <location>
        <position position="1129"/>
    </location>
</feature>
<feature type="sequence conflict" description="In Ref. 1; CAA43480." evidence="5" ref="1">
    <original>V</original>
    <variation>G</variation>
    <location>
        <position position="673"/>
    </location>
</feature>
<evidence type="ECO:0000250" key="1"/>
<evidence type="ECO:0000250" key="2">
    <source>
        <dbReference type="UniProtKB" id="P28494"/>
    </source>
</evidence>
<evidence type="ECO:0000250" key="3">
    <source>
        <dbReference type="UniProtKB" id="Q29451"/>
    </source>
</evidence>
<evidence type="ECO:0000255" key="4"/>
<evidence type="ECO:0000305" key="5"/>
<evidence type="ECO:0007744" key="6">
    <source>
    </source>
</evidence>
<evidence type="ECO:0007744" key="7">
    <source>
    </source>
</evidence>
<gene>
    <name type="primary">Man2a1</name>
    <name type="synonym">Mana2</name>
</gene>
<name>MA2A1_MOUSE</name>
<proteinExistence type="evidence at protein level"/>
<comment type="function">
    <text evidence="2">Catalyzes the first committed step in the biosynthesis of complex N-glycans. It controls conversion of high mannose to complex N-glycans; the final hydrolytic step in the N-glycan maturation pathway.</text>
</comment>
<comment type="catalytic activity">
    <reaction evidence="2">
        <text>N(4)-{beta-D-GlcNAc-(1-&gt;2)-alpha-D-Man-(1-&gt;3)-[alpha-D-Man-(1-&gt;3)-[alpha-D-Man-(1-&gt;6)]-alpha-D-Man-(1-&gt;6)]-beta-D-Man-(1-&gt;4)-beta-D-GlcNAc-(1-&gt;4)-beta-D-GlcNAc}-L-asparaginyl-[protein] + 2 H2O = 2 alpha-D-mannopyranose + an N(4)-{beta-D-GlcNAc-(1-&gt;2)-alpha-D-Man-(1-&gt;3)-[alpha-D-Man-(1-&gt;6)]-beta-D-Man-(1-&gt;4)-beta-D-GlcNAc-(1-&gt;4)-beta-D-GlcNAc}-L-asparaginyl-[protein]</text>
        <dbReference type="Rhea" id="RHEA:56052"/>
        <dbReference type="Rhea" id="RHEA-COMP:14368"/>
        <dbReference type="Rhea" id="RHEA-COMP:14369"/>
        <dbReference type="ChEBI" id="CHEBI:15377"/>
        <dbReference type="ChEBI" id="CHEBI:28729"/>
        <dbReference type="ChEBI" id="CHEBI:60615"/>
        <dbReference type="ChEBI" id="CHEBI:60625"/>
        <dbReference type="EC" id="3.2.1.114"/>
    </reaction>
</comment>
<comment type="cofactor">
    <cofactor evidence="3">
        <name>Zn(2+)</name>
        <dbReference type="ChEBI" id="CHEBI:29105"/>
    </cofactor>
    <text evidence="3">Binds 1 zinc ion per subunit.</text>
</comment>
<comment type="pathway">
    <text>Protein modification; protein glycosylation.</text>
</comment>
<comment type="subunit">
    <text>Homodimer; disulfide-linked.</text>
</comment>
<comment type="subcellular location">
    <subcellularLocation>
        <location>Golgi apparatus membrane</location>
        <topology>Single-pass type II membrane protein</topology>
    </subcellularLocation>
</comment>
<comment type="tissue specificity">
    <text>All tissues, mostly in adrenal and thymus.</text>
</comment>
<comment type="PTM">
    <text evidence="2">Glycosylated.</text>
</comment>
<comment type="similarity">
    <text evidence="5">Belongs to the glycosyl hydrolase 38 family.</text>
</comment>
<organism>
    <name type="scientific">Mus musculus</name>
    <name type="common">Mouse</name>
    <dbReference type="NCBI Taxonomy" id="10090"/>
    <lineage>
        <taxon>Eukaryota</taxon>
        <taxon>Metazoa</taxon>
        <taxon>Chordata</taxon>
        <taxon>Craniata</taxon>
        <taxon>Vertebrata</taxon>
        <taxon>Euteleostomi</taxon>
        <taxon>Mammalia</taxon>
        <taxon>Eutheria</taxon>
        <taxon>Euarchontoglires</taxon>
        <taxon>Glires</taxon>
        <taxon>Rodentia</taxon>
        <taxon>Myomorpha</taxon>
        <taxon>Muroidea</taxon>
        <taxon>Muridae</taxon>
        <taxon>Murinae</taxon>
        <taxon>Mus</taxon>
        <taxon>Mus</taxon>
    </lineage>
</organism>